<gene>
    <name evidence="1" type="primary">rlmH</name>
    <name type="ordered locus">VF_0749</name>
</gene>
<reference key="1">
    <citation type="journal article" date="2005" name="Proc. Natl. Acad. Sci. U.S.A.">
        <title>Complete genome sequence of Vibrio fischeri: a symbiotic bacterium with pathogenic congeners.</title>
        <authorList>
            <person name="Ruby E.G."/>
            <person name="Urbanowski M."/>
            <person name="Campbell J."/>
            <person name="Dunn A."/>
            <person name="Faini M."/>
            <person name="Gunsalus R."/>
            <person name="Lostroh P."/>
            <person name="Lupp C."/>
            <person name="McCann J."/>
            <person name="Millikan D."/>
            <person name="Schaefer A."/>
            <person name="Stabb E."/>
            <person name="Stevens A."/>
            <person name="Visick K."/>
            <person name="Whistler C."/>
            <person name="Greenberg E.P."/>
        </authorList>
    </citation>
    <scope>NUCLEOTIDE SEQUENCE [LARGE SCALE GENOMIC DNA]</scope>
    <source>
        <strain>ATCC 700601 / ES114</strain>
    </source>
</reference>
<organism>
    <name type="scientific">Aliivibrio fischeri (strain ATCC 700601 / ES114)</name>
    <name type="common">Vibrio fischeri</name>
    <dbReference type="NCBI Taxonomy" id="312309"/>
    <lineage>
        <taxon>Bacteria</taxon>
        <taxon>Pseudomonadati</taxon>
        <taxon>Pseudomonadota</taxon>
        <taxon>Gammaproteobacteria</taxon>
        <taxon>Vibrionales</taxon>
        <taxon>Vibrionaceae</taxon>
        <taxon>Aliivibrio</taxon>
    </lineage>
</organism>
<feature type="chain" id="PRO_0000198207" description="Ribosomal RNA large subunit methyltransferase H">
    <location>
        <begin position="1"/>
        <end position="156"/>
    </location>
</feature>
<feature type="binding site" evidence="1">
    <location>
        <position position="73"/>
    </location>
    <ligand>
        <name>S-adenosyl-L-methionine</name>
        <dbReference type="ChEBI" id="CHEBI:59789"/>
    </ligand>
</feature>
<feature type="binding site" evidence="1">
    <location>
        <position position="104"/>
    </location>
    <ligand>
        <name>S-adenosyl-L-methionine</name>
        <dbReference type="ChEBI" id="CHEBI:59789"/>
    </ligand>
</feature>
<feature type="binding site" evidence="1">
    <location>
        <begin position="123"/>
        <end position="128"/>
    </location>
    <ligand>
        <name>S-adenosyl-L-methionine</name>
        <dbReference type="ChEBI" id="CHEBI:59789"/>
    </ligand>
</feature>
<accession>Q5E6V2</accession>
<dbReference type="EC" id="2.1.1.177" evidence="1"/>
<dbReference type="EMBL" id="CP000020">
    <property type="protein sequence ID" value="AAW85244.1"/>
    <property type="molecule type" value="Genomic_DNA"/>
</dbReference>
<dbReference type="RefSeq" id="WP_011261456.1">
    <property type="nucleotide sequence ID" value="NC_006840.2"/>
</dbReference>
<dbReference type="RefSeq" id="YP_204132.1">
    <property type="nucleotide sequence ID" value="NC_006840.2"/>
</dbReference>
<dbReference type="SMR" id="Q5E6V2"/>
<dbReference type="STRING" id="312309.VF_0749"/>
<dbReference type="EnsemblBacteria" id="AAW85244">
    <property type="protein sequence ID" value="AAW85244"/>
    <property type="gene ID" value="VF_0749"/>
</dbReference>
<dbReference type="GeneID" id="54163403"/>
<dbReference type="KEGG" id="vfi:VF_0749"/>
<dbReference type="PATRIC" id="fig|312309.11.peg.742"/>
<dbReference type="eggNOG" id="COG1576">
    <property type="taxonomic scope" value="Bacteria"/>
</dbReference>
<dbReference type="HOGENOM" id="CLU_100552_1_0_6"/>
<dbReference type="OrthoDB" id="9806643at2"/>
<dbReference type="Proteomes" id="UP000000537">
    <property type="component" value="Chromosome I"/>
</dbReference>
<dbReference type="GO" id="GO:0005737">
    <property type="term" value="C:cytoplasm"/>
    <property type="evidence" value="ECO:0007669"/>
    <property type="project" value="UniProtKB-SubCell"/>
</dbReference>
<dbReference type="GO" id="GO:0070038">
    <property type="term" value="F:rRNA (pseudouridine-N3-)-methyltransferase activity"/>
    <property type="evidence" value="ECO:0007669"/>
    <property type="project" value="UniProtKB-UniRule"/>
</dbReference>
<dbReference type="CDD" id="cd18081">
    <property type="entry name" value="RlmH-like"/>
    <property type="match status" value="1"/>
</dbReference>
<dbReference type="Gene3D" id="3.40.1280.10">
    <property type="match status" value="1"/>
</dbReference>
<dbReference type="HAMAP" id="MF_00658">
    <property type="entry name" value="23SrRNA_methyltr_H"/>
    <property type="match status" value="1"/>
</dbReference>
<dbReference type="InterPro" id="IPR029028">
    <property type="entry name" value="Alpha/beta_knot_MTases"/>
</dbReference>
<dbReference type="InterPro" id="IPR003742">
    <property type="entry name" value="RlmH-like"/>
</dbReference>
<dbReference type="InterPro" id="IPR029026">
    <property type="entry name" value="tRNA_m1G_MTases_N"/>
</dbReference>
<dbReference type="NCBIfam" id="NF000984">
    <property type="entry name" value="PRK00103.1-1"/>
    <property type="match status" value="1"/>
</dbReference>
<dbReference type="NCBIfam" id="NF000986">
    <property type="entry name" value="PRK00103.1-4"/>
    <property type="match status" value="1"/>
</dbReference>
<dbReference type="NCBIfam" id="TIGR00246">
    <property type="entry name" value="tRNA_RlmH_YbeA"/>
    <property type="match status" value="1"/>
</dbReference>
<dbReference type="PANTHER" id="PTHR33603">
    <property type="entry name" value="METHYLTRANSFERASE"/>
    <property type="match status" value="1"/>
</dbReference>
<dbReference type="PANTHER" id="PTHR33603:SF1">
    <property type="entry name" value="RIBOSOMAL RNA LARGE SUBUNIT METHYLTRANSFERASE H"/>
    <property type="match status" value="1"/>
</dbReference>
<dbReference type="Pfam" id="PF02590">
    <property type="entry name" value="SPOUT_MTase"/>
    <property type="match status" value="1"/>
</dbReference>
<dbReference type="PIRSF" id="PIRSF004505">
    <property type="entry name" value="MT_bac"/>
    <property type="match status" value="1"/>
</dbReference>
<dbReference type="SUPFAM" id="SSF75217">
    <property type="entry name" value="alpha/beta knot"/>
    <property type="match status" value="1"/>
</dbReference>
<comment type="function">
    <text evidence="1">Specifically methylates the pseudouridine at position 1915 (m3Psi1915) in 23S rRNA.</text>
</comment>
<comment type="catalytic activity">
    <reaction evidence="1">
        <text>pseudouridine(1915) in 23S rRNA + S-adenosyl-L-methionine = N(3)-methylpseudouridine(1915) in 23S rRNA + S-adenosyl-L-homocysteine + H(+)</text>
        <dbReference type="Rhea" id="RHEA:42752"/>
        <dbReference type="Rhea" id="RHEA-COMP:10221"/>
        <dbReference type="Rhea" id="RHEA-COMP:10222"/>
        <dbReference type="ChEBI" id="CHEBI:15378"/>
        <dbReference type="ChEBI" id="CHEBI:57856"/>
        <dbReference type="ChEBI" id="CHEBI:59789"/>
        <dbReference type="ChEBI" id="CHEBI:65314"/>
        <dbReference type="ChEBI" id="CHEBI:74486"/>
        <dbReference type="EC" id="2.1.1.177"/>
    </reaction>
</comment>
<comment type="subunit">
    <text evidence="1">Homodimer.</text>
</comment>
<comment type="subcellular location">
    <subcellularLocation>
        <location evidence="1">Cytoplasm</location>
    </subcellularLocation>
</comment>
<comment type="similarity">
    <text evidence="1">Belongs to the RNA methyltransferase RlmH family.</text>
</comment>
<proteinExistence type="inferred from homology"/>
<keyword id="KW-0963">Cytoplasm</keyword>
<keyword id="KW-0489">Methyltransferase</keyword>
<keyword id="KW-1185">Reference proteome</keyword>
<keyword id="KW-0698">rRNA processing</keyword>
<keyword id="KW-0949">S-adenosyl-L-methionine</keyword>
<keyword id="KW-0808">Transferase</keyword>
<name>RLMH_ALIF1</name>
<protein>
    <recommendedName>
        <fullName evidence="1">Ribosomal RNA large subunit methyltransferase H</fullName>
        <ecNumber evidence="1">2.1.1.177</ecNumber>
    </recommendedName>
    <alternativeName>
        <fullName evidence="1">23S rRNA (pseudouridine1915-N3)-methyltransferase</fullName>
    </alternativeName>
    <alternativeName>
        <fullName evidence="1">23S rRNA m3Psi1915 methyltransferase</fullName>
    </alternativeName>
    <alternativeName>
        <fullName evidence="1">rRNA (pseudouridine-N3-)-methyltransferase RlmH</fullName>
    </alternativeName>
</protein>
<sequence length="156" mass="17441">MKIQLVAVGTKMPKWVEEGYKEYSRRFPKDMPLELVEITAGKRGKNADIARILQKEGEAMLAAVPKGNRIVTLDIPGKRWDTEQLAEQLEAWKLDARDVSILIGGPEGLAPACKAAADQSWSLSPLTLPHPLVRVVMAESLYRAWSITANHPYHRE</sequence>
<evidence type="ECO:0000255" key="1">
    <source>
        <dbReference type="HAMAP-Rule" id="MF_00658"/>
    </source>
</evidence>